<organism>
    <name type="scientific">Haemophilus influenzae (strain ATCC 51907 / DSM 11121 / KW20 / Rd)</name>
    <dbReference type="NCBI Taxonomy" id="71421"/>
    <lineage>
        <taxon>Bacteria</taxon>
        <taxon>Pseudomonadati</taxon>
        <taxon>Pseudomonadota</taxon>
        <taxon>Gammaproteobacteria</taxon>
        <taxon>Pasteurellales</taxon>
        <taxon>Pasteurellaceae</taxon>
        <taxon>Haemophilus</taxon>
    </lineage>
</organism>
<gene>
    <name type="ordered locus">HI_1498</name>
</gene>
<protein>
    <recommendedName>
        <fullName>Uncharacterized protein HI_1498</fullName>
    </recommendedName>
</protein>
<accession>P44222</accession>
<evidence type="ECO:0000255" key="1"/>
<evidence type="ECO:0000305" key="2"/>
<keyword id="KW-0472">Membrane</keyword>
<keyword id="KW-1185">Reference proteome</keyword>
<keyword id="KW-0812">Transmembrane</keyword>
<keyword id="KW-1133">Transmembrane helix</keyword>
<comment type="subcellular location">
    <subcellularLocation>
        <location evidence="2">Membrane</location>
        <topology evidence="2">Single-pass membrane protein</topology>
    </subcellularLocation>
</comment>
<sequence>MWLAHSHYTLACESIRSPLCKLPARLGGRTMISEFWEFVRSNFGVISTLIAIFIGAFWLKLDSKYAKKHDLSQLADIARSHDNRLATLESKVENLPTAVDVERLKTLLTDVKGDTKATSRQVDAMSHQVGLLLEAKLKE</sequence>
<proteinExistence type="evidence at protein level"/>
<name>Y1498_HAEIN</name>
<reference key="1">
    <citation type="journal article" date="1995" name="Science">
        <title>Whole-genome random sequencing and assembly of Haemophilus influenzae Rd.</title>
        <authorList>
            <person name="Fleischmann R.D."/>
            <person name="Adams M.D."/>
            <person name="White O."/>
            <person name="Clayton R.A."/>
            <person name="Kirkness E.F."/>
            <person name="Kerlavage A.R."/>
            <person name="Bult C.J."/>
            <person name="Tomb J.-F."/>
            <person name="Dougherty B.A."/>
            <person name="Merrick J.M."/>
            <person name="McKenney K."/>
            <person name="Sutton G.G."/>
            <person name="FitzHugh W."/>
            <person name="Fields C.A."/>
            <person name="Gocayne J.D."/>
            <person name="Scott J.D."/>
            <person name="Shirley R."/>
            <person name="Liu L.-I."/>
            <person name="Glodek A."/>
            <person name="Kelley J.M."/>
            <person name="Weidman J.F."/>
            <person name="Phillips C.A."/>
            <person name="Spriggs T."/>
            <person name="Hedblom E."/>
            <person name="Cotton M.D."/>
            <person name="Utterback T.R."/>
            <person name="Hanna M.C."/>
            <person name="Nguyen D.T."/>
            <person name="Saudek D.M."/>
            <person name="Brandon R.C."/>
            <person name="Fine L.D."/>
            <person name="Fritchman J.L."/>
            <person name="Fuhrmann J.L."/>
            <person name="Geoghagen N.S.M."/>
            <person name="Gnehm C.L."/>
            <person name="McDonald L.A."/>
            <person name="Small K.V."/>
            <person name="Fraser C.M."/>
            <person name="Smith H.O."/>
            <person name="Venter J.C."/>
        </authorList>
    </citation>
    <scope>NUCLEOTIDE SEQUENCE [LARGE SCALE GENOMIC DNA]</scope>
    <source>
        <strain>ATCC 51907 / DSM 11121 / KW20 / Rd</strain>
    </source>
</reference>
<reference key="2">
    <citation type="journal article" date="2000" name="Electrophoresis">
        <title>Two-dimensional map of the proteome of Haemophilus influenzae.</title>
        <authorList>
            <person name="Langen H."/>
            <person name="Takacs B."/>
            <person name="Evers S."/>
            <person name="Berndt P."/>
            <person name="Lahm H.W."/>
            <person name="Wipf B."/>
            <person name="Gray C."/>
            <person name="Fountoulakis M."/>
        </authorList>
    </citation>
    <scope>IDENTIFICATION BY MASS SPECTROMETRY</scope>
    <source>
        <strain>ATCC 51907 / DSM 11121 / KW20 / Rd</strain>
    </source>
</reference>
<feature type="chain" id="PRO_0000078078" description="Uncharacterized protein HI_1498">
    <location>
        <begin position="1"/>
        <end position="139"/>
    </location>
</feature>
<feature type="transmembrane region" description="Helical" evidence="1">
    <location>
        <begin position="43"/>
        <end position="59"/>
    </location>
</feature>
<dbReference type="EMBL" id="L42023">
    <property type="protein sequence ID" value="AAC23148.1"/>
    <property type="molecule type" value="Genomic_DNA"/>
</dbReference>
<dbReference type="PIR" id="G64032">
    <property type="entry name" value="G64032"/>
</dbReference>
<dbReference type="RefSeq" id="NP_439647.1">
    <property type="nucleotide sequence ID" value="NC_000907.1"/>
</dbReference>
<dbReference type="SMR" id="P44222"/>
<dbReference type="STRING" id="71421.HI_1498"/>
<dbReference type="EnsemblBacteria" id="AAC23148">
    <property type="protein sequence ID" value="AAC23148"/>
    <property type="gene ID" value="HI_1498"/>
</dbReference>
<dbReference type="KEGG" id="hin:HI_1498"/>
<dbReference type="PATRIC" id="fig|71421.8.peg.1567"/>
<dbReference type="eggNOG" id="ENOG5033B9K">
    <property type="taxonomic scope" value="Bacteria"/>
</dbReference>
<dbReference type="HOGENOM" id="CLU_153140_0_0_6"/>
<dbReference type="OrthoDB" id="5683833at2"/>
<dbReference type="BioCyc" id="HINF71421:G1GJ1-1520-MONOMER"/>
<dbReference type="Proteomes" id="UP000000579">
    <property type="component" value="Chromosome"/>
</dbReference>
<dbReference type="GO" id="GO:0016020">
    <property type="term" value="C:membrane"/>
    <property type="evidence" value="ECO:0007669"/>
    <property type="project" value="UniProtKB-SubCell"/>
</dbReference>
<dbReference type="InterPro" id="IPR020269">
    <property type="entry name" value="Phage_Mu_Releasin"/>
</dbReference>
<dbReference type="Pfam" id="PF10805">
    <property type="entry name" value="DUF2730"/>
    <property type="match status" value="1"/>
</dbReference>